<organismHost>
    <name type="scientific">Bandicota bengalensis</name>
    <name type="common">lesser bandicoot rat</name>
    <dbReference type="NCBI Taxonomy" id="69079"/>
</organismHost>
<organismHost>
    <name type="scientific">Callithrix</name>
    <dbReference type="NCBI Taxonomy" id="9481"/>
</organismHost>
<organismHost>
    <name type="scientific">Cercopithecus hamlyni</name>
    <name type="common">Owl-faced monkey</name>
    <name type="synonym">Hamlyn's monkey</name>
    <dbReference type="NCBI Taxonomy" id="9536"/>
</organismHost>
<organismHost>
    <name type="scientific">Chlorocebus aethiops</name>
    <name type="common">Green monkey</name>
    <name type="synonym">Cercopithecus aethiops</name>
    <dbReference type="NCBI Taxonomy" id="9534"/>
</organismHost>
<organismHost>
    <name type="scientific">Homo sapiens</name>
    <name type="common">Human</name>
    <dbReference type="NCBI Taxonomy" id="9606"/>
</organismHost>
<organismHost>
    <name type="scientific">Macaca</name>
    <name type="common">macaques</name>
    <dbReference type="NCBI Taxonomy" id="9539"/>
</organismHost>
<organismHost>
    <name type="scientific">Mus musculus</name>
    <name type="common">Mouse</name>
    <dbReference type="NCBI Taxonomy" id="10090"/>
</organismHost>
<organismHost>
    <name type="scientific">Pan troglodytes</name>
    <name type="common">Chimpanzee</name>
    <dbReference type="NCBI Taxonomy" id="9598"/>
</organismHost>
<organismHost>
    <name type="scientific">Saimiri</name>
    <name type="common">squirrel monkeys</name>
    <dbReference type="NCBI Taxonomy" id="9520"/>
</organismHost>
<organismHost>
    <name type="scientific">Sus scrofa</name>
    <name type="common">Pig</name>
    <dbReference type="NCBI Taxonomy" id="9823"/>
</organismHost>
<reference key="1">
    <citation type="journal article" date="2000" name="J. Med. Virol.">
        <title>Cloning, sequencing, and expression of the hepatitis E virus (HEV) nonstructural open reading frame 1 (ORF1).</title>
        <authorList>
            <person name="Ansari I.H."/>
            <person name="Nanda S.K."/>
            <person name="Durgapal H."/>
            <person name="Agrawal S."/>
            <person name="Mohanty S.K."/>
            <person name="Gupta D."/>
            <person name="Jameel S."/>
            <person name="Panda S.K."/>
        </authorList>
    </citation>
    <scope>NUCLEOTIDE SEQUENCE [GENOMIC RNA]</scope>
</reference>
<reference key="2">
    <citation type="journal article" date="2000" name="J. Virol.">
        <title>The in vitro-synthesized RNA from a cDNA clone of hepatitis E virus is infectious.</title>
        <authorList>
            <person name="Panda S.K."/>
            <person name="Ansari I.H."/>
            <person name="Durgapal H."/>
            <person name="Agrawal S."/>
            <person name="Jameel S."/>
        </authorList>
    </citation>
    <scope>NUCLEOTIDE SEQUENCE [GENOMIC RNA]</scope>
    <source>
        <strain>Infectious clone pSGI-HEV</strain>
    </source>
</reference>
<reference key="3">
    <citation type="journal article" date="2001" name="Virology">
        <title>The 3' end of hepatitis E virus (HEV) genome binds specifically to the viral RNA-dependent RNA polymerase (RdRp).</title>
        <authorList>
            <person name="Agrawal S."/>
            <person name="Gupta D."/>
            <person name="Panda S.K."/>
        </authorList>
    </citation>
    <scope>FUNCTION (RNA-DIRECTED RNA POLYMERASE)</scope>
    <scope>RNA-BINDING</scope>
    <source>
        <strain>Infectious clone pSGI-HEV</strain>
    </source>
</reference>
<accession>Q9WC28</accession>
<accession>O39221</accession>
<comment type="function">
    <text evidence="5">Methyltransferase: Displays a capping enzyme activity. This function is necessary since all viral RNAs are synthesized in the cytoplasm, and host capping enzymes are restricted to the nucleus. The enzymatic reaction involves a covalent link between 7-methyl-GMP and the methyltransferase, whereas eukaryotic capping enzymes form a covalent complex only with GMP. Methyltransferase catalyzes transfer of a methyl group from S-adenosylmethionine to GTP and GDP to yield m(7)GTP or m(7)GDP. GDP is a better substrate than GTP. This enzyme also displays guanylyltransferase activity to form a covalent complex, methyltransferase-m(7)GMP, from which 7-methyl-GMP is transferred to the mRNA to create the cap structure.</text>
</comment>
<comment type="function">
    <text evidence="5">Y-domain: Indispensable for virus replication.</text>
</comment>
<comment type="function">
    <text evidence="5">Putative protease: The putative protease domain although necessary for replication of the virus may not be a protease but rather a structural Zn(2+)-binding domain. Inhibits induction of IFN-beta by MDA5 and RIG-I pathways and down-regulates the expression of MDA5.</text>
</comment>
<comment type="function">
    <text evidence="2 5">NTPase/helicase: Multi-functional protein that exhibits NTPase and RNA unwinding activities (By similarity). Hydrolyzes all NTPs efficiently and unwinds RNA duplexes containing 5' overhangs (By similarity). Possesses a sequence independent RNA-5'-triphosphatase (RTPase) activity suggestive of its role in forming viral cap structure. Also participates in viral genome replication, RNA translocation and genome packaging/unpackaging (By similarity).</text>
</comment>
<comment type="function">
    <text evidence="5 11">RNA-directed RNA polymerase: Plays an essential role in the virus replication (By similarity). Binds to the 3'-end of the genomic RNA to initiate viral replication (PubMed:11259193).</text>
</comment>
<comment type="catalytic activity">
    <reaction evidence="8">
        <text>RNA(n) + a ribonucleoside 5'-triphosphate = RNA(n+1) + diphosphate</text>
        <dbReference type="Rhea" id="RHEA:21248"/>
        <dbReference type="Rhea" id="RHEA-COMP:14527"/>
        <dbReference type="Rhea" id="RHEA-COMP:17342"/>
        <dbReference type="ChEBI" id="CHEBI:33019"/>
        <dbReference type="ChEBI" id="CHEBI:61557"/>
        <dbReference type="ChEBI" id="CHEBI:140395"/>
        <dbReference type="EC" id="2.7.7.48"/>
    </reaction>
</comment>
<comment type="catalytic activity">
    <reaction evidence="5">
        <text>GTP + S-adenosyl-L-methionine = N(7)-methyl-GTP + S-adenosyl-L-homocysteine</text>
        <dbReference type="Rhea" id="RHEA:46948"/>
        <dbReference type="ChEBI" id="CHEBI:37565"/>
        <dbReference type="ChEBI" id="CHEBI:57856"/>
        <dbReference type="ChEBI" id="CHEBI:59789"/>
        <dbReference type="ChEBI" id="CHEBI:87133"/>
    </reaction>
    <physiologicalReaction direction="left-to-right" evidence="5">
        <dbReference type="Rhea" id="RHEA:46949"/>
    </physiologicalReaction>
</comment>
<comment type="cofactor">
    <cofactor evidence="5">
        <name>Mg(2+)</name>
        <dbReference type="ChEBI" id="CHEBI:18420"/>
    </cofactor>
    <text evidence="5">For methyltransferase activity.</text>
</comment>
<comment type="activity regulation">
    <text evidence="5">Putative protease: Inhibited by chymostatin.</text>
</comment>
<comment type="subunit">
    <text evidence="3">The protease domain interacts with host EIF2AK4 (via C-terminus); this interaction inhibits dimerization of EIF2AK4 and prevents EIF2AK4-mediated phosphorylation of host EIF2A.</text>
</comment>
<comment type="interaction">
    <interactant intactId="EBI-11179420">
        <id>Q9WC28</id>
    </interactant>
    <interactant intactId="EBI-11179420">
        <id>Q9WC28</id>
        <label>ORF1</label>
    </interactant>
    <organismsDiffer>false</organismsDiffer>
    <experiments>81</experiments>
</comment>
<comment type="interaction">
    <interactant intactId="EBI-11179420">
        <id>Q9WC28</id>
    </interactant>
    <interactant intactId="EBI-11180197">
        <id>Q68985</id>
        <label>ORF2</label>
    </interactant>
    <organismsDiffer>false</organismsDiffer>
    <experiments>2</experiments>
</comment>
<comment type="interaction">
    <interactant intactId="EBI-11179420">
        <id>Q9WC28</id>
    </interactant>
    <interactant intactId="EBI-11179411">
        <id>O90299</id>
        <label>ORF3</label>
    </interactant>
    <organismsDiffer>false</organismsDiffer>
    <experiments>41</experiments>
</comment>
<comment type="subcellular location">
    <subcellularLocation>
        <location evidence="5">Host cytoplasm</location>
    </subcellularLocation>
    <subcellularLocation>
        <location evidence="5">Host cytoplasm</location>
        <location evidence="5">Host perinuclear region</location>
    </subcellularLocation>
</comment>
<comment type="domain">
    <text evidence="3 5">Contains a methyltransferase domain, a Y-domain, a putative protease region, a zinc-binding region with similarity to calycins, a proline-rich disordered hypervariable region (HVR), a macro domain (also called X-domain), a helicase domain and an RNA-dependent RNA polymerase domain (By similarity). Since the boundaries and the activity of the putative protease are not clearly defined, the zinc-binding region might be part of the putative protease (By similarity).</text>
</comment>
<comment type="PTM">
    <text evidence="5">ORF1 polyprotein does not seem to be processed into distinct enzymatic domains by a viral protease belonging to ORF1, but could be processed by a host serine protease like thrombin.</text>
</comment>
<comment type="similarity">
    <text evidence="12">Belongs to the hepevirus non-structural polyprotein family.</text>
</comment>
<keyword id="KW-0067">ATP-binding</keyword>
<keyword id="KW-1015">Disulfide bond</keyword>
<keyword id="KW-0347">Helicase</keyword>
<keyword id="KW-1035">Host cytoplasm</keyword>
<keyword id="KW-0378">Hydrolase</keyword>
<keyword id="KW-0460">Magnesium</keyword>
<keyword id="KW-0479">Metal-binding</keyword>
<keyword id="KW-0489">Methyltransferase</keyword>
<keyword id="KW-0547">Nucleotide-binding</keyword>
<keyword id="KW-0548">Nucleotidyltransferase</keyword>
<keyword id="KW-0645">Protease</keyword>
<keyword id="KW-0694">RNA-binding</keyword>
<keyword id="KW-0696">RNA-directed RNA polymerase</keyword>
<keyword id="KW-0788">Thiol protease</keyword>
<keyword id="KW-0808">Transferase</keyword>
<keyword id="KW-0693">Viral RNA replication</keyword>
<keyword id="KW-0862">Zinc</keyword>
<gene>
    <name type="ORF">ORF1</name>
</gene>
<name>POLN_HEVHY</name>
<proteinExistence type="evidence at protein level"/>
<organism>
    <name type="scientific">Hepatitis E virus genotype 1 (isolate Human/India/Hyderabad)</name>
    <name type="common">HEV-1</name>
    <dbReference type="NCBI Taxonomy" id="512346"/>
    <lineage>
        <taxon>Viruses</taxon>
        <taxon>Riboviria</taxon>
        <taxon>Orthornavirae</taxon>
        <taxon>Kitrinoviricota</taxon>
        <taxon>Alsuviricetes</taxon>
        <taxon>Hepelivirales</taxon>
        <taxon>Hepeviridae</taxon>
        <taxon>Orthohepevirinae</taxon>
        <taxon>Paslahepevirus</taxon>
        <taxon>Hepatitis E virus</taxon>
    </lineage>
</organism>
<dbReference type="EC" id="2.1.1.-" evidence="4"/>
<dbReference type="EC" id="2.7.7.-" evidence="5"/>
<dbReference type="EC" id="3.4.-.-" evidence="5"/>
<dbReference type="EC" id="3.6.4.-" evidence="5"/>
<dbReference type="EC" id="2.7.7.48"/>
<dbReference type="EMBL" id="AF028091">
    <property type="protein sequence ID" value="AAB82002.2"/>
    <property type="molecule type" value="Genomic_RNA"/>
</dbReference>
<dbReference type="EMBL" id="AF076239">
    <property type="protein sequence ID" value="AAC27934.2"/>
    <property type="molecule type" value="Genomic_RNA"/>
</dbReference>
<dbReference type="SMR" id="Q9WC28"/>
<dbReference type="IntAct" id="Q9WC28">
    <property type="interactions" value="2"/>
</dbReference>
<dbReference type="Proteomes" id="UP000007244">
    <property type="component" value="Genome"/>
</dbReference>
<dbReference type="GO" id="GO:0044220">
    <property type="term" value="C:host cell perinuclear region of cytoplasm"/>
    <property type="evidence" value="ECO:0007669"/>
    <property type="project" value="UniProtKB-SubCell"/>
</dbReference>
<dbReference type="GO" id="GO:0005524">
    <property type="term" value="F:ATP binding"/>
    <property type="evidence" value="ECO:0007669"/>
    <property type="project" value="UniProtKB-KW"/>
</dbReference>
<dbReference type="GO" id="GO:0008234">
    <property type="term" value="F:cysteine-type peptidase activity"/>
    <property type="evidence" value="ECO:0007669"/>
    <property type="project" value="UniProtKB-KW"/>
</dbReference>
<dbReference type="GO" id="GO:0004386">
    <property type="term" value="F:helicase activity"/>
    <property type="evidence" value="ECO:0007669"/>
    <property type="project" value="UniProtKB-KW"/>
</dbReference>
<dbReference type="GO" id="GO:0042802">
    <property type="term" value="F:identical protein binding"/>
    <property type="evidence" value="ECO:0000353"/>
    <property type="project" value="IntAct"/>
</dbReference>
<dbReference type="GO" id="GO:0046872">
    <property type="term" value="F:metal ion binding"/>
    <property type="evidence" value="ECO:0007669"/>
    <property type="project" value="UniProtKB-KW"/>
</dbReference>
<dbReference type="GO" id="GO:0008174">
    <property type="term" value="F:mRNA methyltransferase activity"/>
    <property type="evidence" value="ECO:0007669"/>
    <property type="project" value="InterPro"/>
</dbReference>
<dbReference type="GO" id="GO:0003723">
    <property type="term" value="F:RNA binding"/>
    <property type="evidence" value="ECO:0007669"/>
    <property type="project" value="UniProtKB-KW"/>
</dbReference>
<dbReference type="GO" id="GO:0003968">
    <property type="term" value="F:RNA-directed RNA polymerase activity"/>
    <property type="evidence" value="ECO:0007669"/>
    <property type="project" value="UniProtKB-KW"/>
</dbReference>
<dbReference type="GO" id="GO:0006351">
    <property type="term" value="P:DNA-templated transcription"/>
    <property type="evidence" value="ECO:0007669"/>
    <property type="project" value="InterPro"/>
</dbReference>
<dbReference type="GO" id="GO:0032259">
    <property type="term" value="P:methylation"/>
    <property type="evidence" value="ECO:0007669"/>
    <property type="project" value="UniProtKB-KW"/>
</dbReference>
<dbReference type="GO" id="GO:0016556">
    <property type="term" value="P:mRNA modification"/>
    <property type="evidence" value="ECO:0007669"/>
    <property type="project" value="InterPro"/>
</dbReference>
<dbReference type="GO" id="GO:0006508">
    <property type="term" value="P:proteolysis"/>
    <property type="evidence" value="ECO:0007669"/>
    <property type="project" value="UniProtKB-KW"/>
</dbReference>
<dbReference type="GO" id="GO:0006396">
    <property type="term" value="P:RNA processing"/>
    <property type="evidence" value="ECO:0007669"/>
    <property type="project" value="InterPro"/>
</dbReference>
<dbReference type="GO" id="GO:0019082">
    <property type="term" value="P:viral protein processing"/>
    <property type="evidence" value="ECO:0007669"/>
    <property type="project" value="InterPro"/>
</dbReference>
<dbReference type="GO" id="GO:0039694">
    <property type="term" value="P:viral RNA genome replication"/>
    <property type="evidence" value="ECO:0007669"/>
    <property type="project" value="InterPro"/>
</dbReference>
<dbReference type="CDD" id="cd23259">
    <property type="entry name" value="Hepeviridae_RdRp"/>
    <property type="match status" value="1"/>
</dbReference>
<dbReference type="CDD" id="cd21557">
    <property type="entry name" value="Macro_X_Nsp3-like"/>
    <property type="match status" value="1"/>
</dbReference>
<dbReference type="Gene3D" id="3.40.220.10">
    <property type="entry name" value="Leucine Aminopeptidase, subunit E, domain 1"/>
    <property type="match status" value="1"/>
</dbReference>
<dbReference type="Gene3D" id="3.40.50.300">
    <property type="entry name" value="P-loop containing nucleotide triphosphate hydrolases"/>
    <property type="match status" value="2"/>
</dbReference>
<dbReference type="InterPro" id="IPR027351">
    <property type="entry name" value="(+)RNA_virus_helicase_core_dom"/>
</dbReference>
<dbReference type="InterPro" id="IPR002588">
    <property type="entry name" value="Alphavirus-like_MT_dom"/>
</dbReference>
<dbReference type="InterPro" id="IPR043502">
    <property type="entry name" value="DNA/RNA_pol_sf"/>
</dbReference>
<dbReference type="InterPro" id="IPR008748">
    <property type="entry name" value="Hepatitis-E_Cys-pept"/>
</dbReference>
<dbReference type="InterPro" id="IPR022202">
    <property type="entry name" value="Hepatitis-E_hinge"/>
</dbReference>
<dbReference type="InterPro" id="IPR047307">
    <property type="entry name" value="Hepeviridae_RdRp"/>
</dbReference>
<dbReference type="InterPro" id="IPR002589">
    <property type="entry name" value="Macro_dom"/>
</dbReference>
<dbReference type="InterPro" id="IPR043472">
    <property type="entry name" value="Macro_dom-like"/>
</dbReference>
<dbReference type="InterPro" id="IPR044371">
    <property type="entry name" value="Macro_X_NSP3-like"/>
</dbReference>
<dbReference type="InterPro" id="IPR027417">
    <property type="entry name" value="P-loop_NTPase"/>
</dbReference>
<dbReference type="InterPro" id="IPR001788">
    <property type="entry name" value="RNA-dep_RNA_pol_alsuvir"/>
</dbReference>
<dbReference type="InterPro" id="IPR007094">
    <property type="entry name" value="RNA-dir_pol_PSvirus"/>
</dbReference>
<dbReference type="Pfam" id="PF12526">
    <property type="entry name" value="DUF3729"/>
    <property type="match status" value="1"/>
</dbReference>
<dbReference type="Pfam" id="PF01661">
    <property type="entry name" value="Macro"/>
    <property type="match status" value="1"/>
</dbReference>
<dbReference type="Pfam" id="PF05417">
    <property type="entry name" value="Peptidase_C41"/>
    <property type="match status" value="1"/>
</dbReference>
<dbReference type="Pfam" id="PF00978">
    <property type="entry name" value="RdRP_2"/>
    <property type="match status" value="1"/>
</dbReference>
<dbReference type="Pfam" id="PF01443">
    <property type="entry name" value="Viral_helicase1"/>
    <property type="match status" value="1"/>
</dbReference>
<dbReference type="Pfam" id="PF01660">
    <property type="entry name" value="Vmethyltransf"/>
    <property type="match status" value="1"/>
</dbReference>
<dbReference type="SMART" id="SM00506">
    <property type="entry name" value="A1pp"/>
    <property type="match status" value="1"/>
</dbReference>
<dbReference type="SUPFAM" id="SSF56672">
    <property type="entry name" value="DNA/RNA polymerases"/>
    <property type="match status" value="1"/>
</dbReference>
<dbReference type="SUPFAM" id="SSF52949">
    <property type="entry name" value="Macro domain-like"/>
    <property type="match status" value="1"/>
</dbReference>
<dbReference type="SUPFAM" id="SSF52540">
    <property type="entry name" value="P-loop containing nucleoside triphosphate hydrolases"/>
    <property type="match status" value="1"/>
</dbReference>
<dbReference type="PROSITE" id="PS51743">
    <property type="entry name" value="ALPHAVIRUS_MT"/>
    <property type="match status" value="1"/>
</dbReference>
<dbReference type="PROSITE" id="PS51154">
    <property type="entry name" value="MACRO"/>
    <property type="match status" value="1"/>
</dbReference>
<dbReference type="PROSITE" id="PS51657">
    <property type="entry name" value="PSRV_HELICASE"/>
    <property type="match status" value="1"/>
</dbReference>
<dbReference type="PROSITE" id="PS50507">
    <property type="entry name" value="RDRP_SSRNA_POS"/>
    <property type="match status" value="1"/>
</dbReference>
<protein>
    <recommendedName>
        <fullName>Non-structural polyprotein pORF1</fullName>
    </recommendedName>
    <domain>
        <recommendedName>
            <fullName>Methyltransferase</fullName>
            <ecNumber evidence="4">2.1.1.-</ecNumber>
            <ecNumber evidence="5">2.7.7.-</ecNumber>
        </recommendedName>
    </domain>
    <domain>
        <recommendedName>
            <fullName>Putative protease</fullName>
            <ecNumber evidence="5">3.4.-.-</ecNumber>
        </recommendedName>
        <alternativeName>
            <fullName evidence="3">Putative papain-like cysteine protease</fullName>
            <shortName evidence="3">PCP</shortName>
        </alternativeName>
    </domain>
    <domain>
        <recommendedName>
            <fullName>NTPase/helicase</fullName>
            <ecNumber evidence="5">3.6.4.-</ecNumber>
        </recommendedName>
    </domain>
    <domain>
        <recommendedName>
            <fullName>RNA-directed RNA polymerase</fullName>
            <shortName>RdRp</shortName>
            <ecNumber>2.7.7.48</ecNumber>
        </recommendedName>
    </domain>
</protein>
<evidence type="ECO:0000250" key="1"/>
<evidence type="ECO:0000250" key="2">
    <source>
        <dbReference type="UniProtKB" id="P29324"/>
    </source>
</evidence>
<evidence type="ECO:0000250" key="3">
    <source>
        <dbReference type="UniProtKB" id="P33424"/>
    </source>
</evidence>
<evidence type="ECO:0000250" key="4">
    <source>
        <dbReference type="UniProtKB" id="Q04610"/>
    </source>
</evidence>
<evidence type="ECO:0000250" key="5">
    <source>
        <dbReference type="UniProtKB" id="Q81862"/>
    </source>
</evidence>
<evidence type="ECO:0000255" key="6"/>
<evidence type="ECO:0000255" key="7">
    <source>
        <dbReference type="PROSITE-ProRule" id="PRU00490"/>
    </source>
</evidence>
<evidence type="ECO:0000255" key="8">
    <source>
        <dbReference type="PROSITE-ProRule" id="PRU00539"/>
    </source>
</evidence>
<evidence type="ECO:0000255" key="9">
    <source>
        <dbReference type="PROSITE-ProRule" id="PRU01079"/>
    </source>
</evidence>
<evidence type="ECO:0000256" key="10">
    <source>
        <dbReference type="SAM" id="MobiDB-lite"/>
    </source>
</evidence>
<evidence type="ECO:0000269" key="11">
    <source>
    </source>
</evidence>
<evidence type="ECO:0000305" key="12"/>
<sequence>MEAHQFLKAPGITTAVEQAALATANSALANAVVVRPFLSHQQIEILINLMQPRQLVFRPEVFWNQPIQRVIHNELELYCRARSGRCLEIGAHPRSINDNPNVVHRCFLRPVGRDVQRWYTAPTRGPAANCRRSALRGLPAADRTYCFDGFSGCSCPAETGIALYSLHDMSPSDVAEAMFRHGMTRLYAALHLPPEVLLPPGTYRTASYLLIHDGRRVVVTYEGDTSAGYNHDVSNLRSWIRTTKVTGDHPLVIERVRAIGCHFVLLLTAAPEPSPMPYVPYPRSTEVYVRSIFGPGGTPSLFPTSCSTKSTFHAVPAHIWDRLMLFGATLDDQAFCCSRLMTYLRGISYKVTVGTLVANEGRNASEDALTAVITAAYLTICHQRYLRTQAISKGIRRLEREHDQKFITRLYSWLFEKSGRDYIPGRQLEFYAQCRRWLSAGFHLDPRVLVFDESAPCHCRTVIRKALSKFCCFMKWLGQECTCFLQPAEGVVGDQGHDNESYEGSDVDPAESAISDISGSYVVPGTALQPLYQALDLPDEIVARACRLTATVKVSQVDGRIDCETLLGNKTFRTSFVDGAVLETNGPERHNLSFDASQSTMAAGPFSLTYAASAAGLEVRYVGAGLDHRAIFAPGVSPRSNPGEVTAFCSALYRFNREAQRHSLTGNLWFHPEGLIGLFAPFSPGHVWESAKPFCGESTLYTRTWSEVDAVSSPTRPDLGFMSEPPIPSRAATPTLAAPLPPLAPDPSPPSSAPALDEPASAATSGVPAITHQTARHRRLLFTYPDGSKVFAGSLFESTCTWLVNASNVDHCPGGGLCHAFYQRYPASFDAACFVMRDGAAAYTLTPRPIIHRVAPDYRLEHNPKRLEAAYRETCSRLGTAAYPLLGTGIYQVPIGPSFDAWERNHRPGDELYLPELAARWFEANRPTRPTLTITEDAARTANLAIELDSATDVGRACAGCRVTPGVVQYQFTAGVPGSGKSRSITRADVDVVVVPTRELRNAWRRRGFAAFTPHTAARVTDGRRVVIDEAPSLPPHLLLLHMQRAATVHLLGDPNQIPAIDFEHPGLVPAIRPDLAPTSWWHVTHRCPADVCELIRGAYPMIQTTSRVLRSLFWGEPAVGQKLVFTQAAKPANPGSVTVHDSQGATYTYTTIIATADARGLIQSSRAHAIVALTRHTEKWVIIDAPGLLREVGISDAIVNNFFLAGGEIGHQRPSVIPRGNPDANVDTLAAFPPSCQISAFHQLAEELGHRPAPVAAVLPPCPELEQGLLYLPQELTTCDSVVTFELTDIVHCRMAAPSQRKAVVSTLVGRYGRRTKLYNASHSDVRDSLARFIPAIGPVQVTTCELYELVEAMVEKGQDGSAVLELDLCNRDVSRITFFQKDCNKFTTGETIAHGKVGQGISAWSKTFCALFGPWFRAIEKAILALLPQGVFYGDAFDDTVFSAAVAAAKASMVFENDFSEFDSTQNNFSLGLECAIMEECGMPQGLIRLYHLIRSAWILQAPKESLLGFWKKHSGEPGTLLWNTVWNMAVITHCYDFRDLQVAAFKGDDSIVLCSEYRQSPGAAVLIAGCGLKLKVDFRPMRLYAGVVVAPGLGALPDVVRFAGRLTEKNWGPGPERADELRIAVSDFLRKLTNVAQMCVDVVSRVYGVSPGLVHNLIGMLQAVADGKAHFTESVKPVLDLTNSILCRVE</sequence>
<feature type="chain" id="PRO_0000334530" description="Non-structural polyprotein pORF1">
    <location>
        <begin position="1"/>
        <end position="1693"/>
    </location>
</feature>
<feature type="domain" description="Alphavirus-like MT" evidence="9">
    <location>
        <begin position="56"/>
        <end position="240"/>
    </location>
</feature>
<feature type="domain" description="Macro" evidence="7">
    <location>
        <begin position="775"/>
        <end position="921"/>
    </location>
</feature>
<feature type="domain" description="(+)RNA virus helicase ATP-binding">
    <location>
        <begin position="934"/>
        <end position="1082"/>
    </location>
</feature>
<feature type="domain" description="(+)RNA virus helicase C-terminal">
    <location>
        <begin position="1083"/>
        <end position="1216"/>
    </location>
</feature>
<feature type="domain" description="RdRp catalytic" evidence="8">
    <location>
        <begin position="1454"/>
        <end position="1565"/>
    </location>
</feature>
<feature type="region of interest" description="Methyltransferase" evidence="1">
    <location>
        <begin position="60"/>
        <end position="240"/>
    </location>
</feature>
<feature type="region of interest" description="Y-domain" evidence="5">
    <location>
        <begin position="241"/>
        <end position="439"/>
    </location>
</feature>
<feature type="region of interest" description="Putative protease" evidence="3">
    <location>
        <begin position="442"/>
        <end position="509"/>
    </location>
</feature>
<feature type="region of interest" description="Zinc-binding" evidence="3">
    <location>
        <begin position="510"/>
        <end position="691"/>
    </location>
</feature>
<feature type="region of interest" description="Hinge" evidence="1">
    <location>
        <begin position="712"/>
        <end position="778"/>
    </location>
</feature>
<feature type="region of interest" description="Disordered" evidence="10">
    <location>
        <begin position="716"/>
        <end position="769"/>
    </location>
</feature>
<feature type="region of interest" description="X-domain" evidence="1">
    <location>
        <begin position="785"/>
        <end position="942"/>
    </location>
</feature>
<feature type="region of interest" description="NTPase/helicase" evidence="1">
    <location>
        <begin position="960"/>
        <end position="1204"/>
    </location>
</feature>
<feature type="region of interest" description="RNA-directed RNA polymerase" evidence="1">
    <location>
        <begin position="1207"/>
        <end position="1693"/>
    </location>
</feature>
<feature type="compositionally biased region" description="Pro residues" evidence="10">
    <location>
        <begin position="739"/>
        <end position="752"/>
    </location>
</feature>
<feature type="compositionally biased region" description="Low complexity" evidence="10">
    <location>
        <begin position="753"/>
        <end position="763"/>
    </location>
</feature>
<feature type="binding site" evidence="3">
    <location>
        <position position="671"/>
    </location>
    <ligand>
        <name>Zn(2+)</name>
        <dbReference type="ChEBI" id="CHEBI:29105"/>
    </ligand>
</feature>
<feature type="binding site" evidence="3">
    <location>
        <position position="673"/>
    </location>
    <ligand>
        <name>Zn(2+)</name>
        <dbReference type="ChEBI" id="CHEBI:29105"/>
    </ligand>
</feature>
<feature type="binding site" evidence="3">
    <location>
        <position position="686"/>
    </location>
    <ligand>
        <name>Zn(2+)</name>
        <dbReference type="ChEBI" id="CHEBI:29105"/>
    </ligand>
</feature>
<feature type="binding site" evidence="6">
    <location>
        <begin position="975"/>
        <end position="982"/>
    </location>
    <ligand>
        <name>ATP</name>
        <dbReference type="ChEBI" id="CHEBI:30616"/>
    </ligand>
</feature>
<feature type="disulfide bond" evidence="5">
    <location>
        <begin position="434"/>
        <end position="481"/>
    </location>
</feature>
<feature type="sequence conflict" description="In Ref. 2; AAC27934." evidence="12" ref="2">
    <original>Y</original>
    <variation>F</variation>
    <location>
        <position position="1100"/>
    </location>
</feature>